<proteinExistence type="evidence at protein level"/>
<name>Y1162_HAEIN</name>
<feature type="chain" id="PRO_0000168892" description="Uncharacterized protein HI_1162">
    <location>
        <begin position="1"/>
        <end position="157"/>
    </location>
</feature>
<sequence length="157" mass="18542">MITCLPLLAGEGARRKGDIGMRNKNKRLAQYATELRRNMTDAEYALWYHLRNKLFCGIRFNRQVIIGHYIVDFCSRKLKLVIELDGIQHVEQEQYDLERTKFLTAQGYKVIRFWNDEVLKNIDNVLEAIYVEIEHLSPPHFGSSPHKWVEPRLEVLK</sequence>
<keyword id="KW-1185">Reference proteome</keyword>
<comment type="similarity">
    <text evidence="1">To E.coli YcjD and H.influenzae HI_0925.</text>
</comment>
<protein>
    <recommendedName>
        <fullName>Uncharacterized protein HI_1162</fullName>
    </recommendedName>
</protein>
<organism>
    <name type="scientific">Haemophilus influenzae (strain ATCC 51907 / DSM 11121 / KW20 / Rd)</name>
    <dbReference type="NCBI Taxonomy" id="71421"/>
    <lineage>
        <taxon>Bacteria</taxon>
        <taxon>Pseudomonadati</taxon>
        <taxon>Pseudomonadota</taxon>
        <taxon>Gammaproteobacteria</taxon>
        <taxon>Pasteurellales</taxon>
        <taxon>Pasteurellaceae</taxon>
        <taxon>Haemophilus</taxon>
    </lineage>
</organism>
<gene>
    <name type="ordered locus">HI_1162</name>
</gene>
<dbReference type="EMBL" id="L42023">
    <property type="protein sequence ID" value="AAC22817.1"/>
    <property type="molecule type" value="Genomic_DNA"/>
</dbReference>
<dbReference type="PIR" id="H64020">
    <property type="entry name" value="H64020"/>
</dbReference>
<dbReference type="RefSeq" id="NP_439320.1">
    <property type="nucleotide sequence ID" value="NC_000907.1"/>
</dbReference>
<dbReference type="SMR" id="P44116"/>
<dbReference type="STRING" id="71421.HI_1162"/>
<dbReference type="EnsemblBacteria" id="AAC22817">
    <property type="protein sequence ID" value="AAC22817"/>
    <property type="gene ID" value="HI_1162"/>
</dbReference>
<dbReference type="KEGG" id="hin:HI_1162"/>
<dbReference type="PATRIC" id="fig|71421.8.peg.1214"/>
<dbReference type="eggNOG" id="COG2852">
    <property type="taxonomic scope" value="Bacteria"/>
</dbReference>
<dbReference type="HOGENOM" id="CLU_107928_0_1_6"/>
<dbReference type="OrthoDB" id="9798754at2"/>
<dbReference type="PhylomeDB" id="P44116"/>
<dbReference type="BioCyc" id="HINF71421:G1GJ1-1196-MONOMER"/>
<dbReference type="Proteomes" id="UP000000579">
    <property type="component" value="Chromosome"/>
</dbReference>
<dbReference type="CDD" id="cd01038">
    <property type="entry name" value="Endonuclease_DUF559"/>
    <property type="match status" value="1"/>
</dbReference>
<dbReference type="Gene3D" id="3.40.960.10">
    <property type="entry name" value="VSR Endonuclease"/>
    <property type="match status" value="1"/>
</dbReference>
<dbReference type="InterPro" id="IPR007569">
    <property type="entry name" value="DUF559"/>
</dbReference>
<dbReference type="InterPro" id="IPR047216">
    <property type="entry name" value="Endonuclease_DUF559_bact"/>
</dbReference>
<dbReference type="InterPro" id="IPR011335">
    <property type="entry name" value="Restrct_endonuc-II-like"/>
</dbReference>
<dbReference type="PANTHER" id="PTHR38590">
    <property type="entry name" value="BLL0828 PROTEIN"/>
    <property type="match status" value="1"/>
</dbReference>
<dbReference type="PANTHER" id="PTHR38590:SF1">
    <property type="entry name" value="BLL0828 PROTEIN"/>
    <property type="match status" value="1"/>
</dbReference>
<dbReference type="Pfam" id="PF04480">
    <property type="entry name" value="DUF559"/>
    <property type="match status" value="1"/>
</dbReference>
<dbReference type="SUPFAM" id="SSF52980">
    <property type="entry name" value="Restriction endonuclease-like"/>
    <property type="match status" value="1"/>
</dbReference>
<reference key="1">
    <citation type="journal article" date="1995" name="Science">
        <title>Whole-genome random sequencing and assembly of Haemophilus influenzae Rd.</title>
        <authorList>
            <person name="Fleischmann R.D."/>
            <person name="Adams M.D."/>
            <person name="White O."/>
            <person name="Clayton R.A."/>
            <person name="Kirkness E.F."/>
            <person name="Kerlavage A.R."/>
            <person name="Bult C.J."/>
            <person name="Tomb J.-F."/>
            <person name="Dougherty B.A."/>
            <person name="Merrick J.M."/>
            <person name="McKenney K."/>
            <person name="Sutton G.G."/>
            <person name="FitzHugh W."/>
            <person name="Fields C.A."/>
            <person name="Gocayne J.D."/>
            <person name="Scott J.D."/>
            <person name="Shirley R."/>
            <person name="Liu L.-I."/>
            <person name="Glodek A."/>
            <person name="Kelley J.M."/>
            <person name="Weidman J.F."/>
            <person name="Phillips C.A."/>
            <person name="Spriggs T."/>
            <person name="Hedblom E."/>
            <person name="Cotton M.D."/>
            <person name="Utterback T.R."/>
            <person name="Hanna M.C."/>
            <person name="Nguyen D.T."/>
            <person name="Saudek D.M."/>
            <person name="Brandon R.C."/>
            <person name="Fine L.D."/>
            <person name="Fritchman J.L."/>
            <person name="Fuhrmann J.L."/>
            <person name="Geoghagen N.S.M."/>
            <person name="Gnehm C.L."/>
            <person name="McDonald L.A."/>
            <person name="Small K.V."/>
            <person name="Fraser C.M."/>
            <person name="Smith H.O."/>
            <person name="Venter J.C."/>
        </authorList>
    </citation>
    <scope>NUCLEOTIDE SEQUENCE [LARGE SCALE GENOMIC DNA]</scope>
    <source>
        <strain>ATCC 51907 / DSM 11121 / KW20 / Rd</strain>
    </source>
</reference>
<reference key="2">
    <citation type="journal article" date="2000" name="Electrophoresis">
        <title>Two-dimensional map of the proteome of Haemophilus influenzae.</title>
        <authorList>
            <person name="Langen H."/>
            <person name="Takacs B."/>
            <person name="Evers S."/>
            <person name="Berndt P."/>
            <person name="Lahm H.W."/>
            <person name="Wipf B."/>
            <person name="Gray C."/>
            <person name="Fountoulakis M."/>
        </authorList>
    </citation>
    <scope>IDENTIFICATION BY MASS SPECTROMETRY</scope>
    <source>
        <strain>ATCC 51907 / DSM 11121 / KW20 / Rd</strain>
    </source>
</reference>
<accession>P44116</accession>
<evidence type="ECO:0000305" key="1"/>